<proteinExistence type="inferred from homology"/>
<gene>
    <name evidence="1" type="primary">yciB</name>
    <name type="ordered locus">BBta_0376</name>
</gene>
<dbReference type="EMBL" id="CP000494">
    <property type="protein sequence ID" value="ABQ32663.1"/>
    <property type="molecule type" value="Genomic_DNA"/>
</dbReference>
<dbReference type="RefSeq" id="WP_012040716.1">
    <property type="nucleotide sequence ID" value="NC_009485.1"/>
</dbReference>
<dbReference type="STRING" id="288000.BBta_0376"/>
<dbReference type="KEGG" id="bbt:BBta_0376"/>
<dbReference type="eggNOG" id="COG2917">
    <property type="taxonomic scope" value="Bacteria"/>
</dbReference>
<dbReference type="HOGENOM" id="CLU_089554_1_1_5"/>
<dbReference type="OrthoDB" id="9788219at2"/>
<dbReference type="Proteomes" id="UP000000246">
    <property type="component" value="Chromosome"/>
</dbReference>
<dbReference type="GO" id="GO:0005886">
    <property type="term" value="C:plasma membrane"/>
    <property type="evidence" value="ECO:0007669"/>
    <property type="project" value="UniProtKB-SubCell"/>
</dbReference>
<dbReference type="HAMAP" id="MF_00189">
    <property type="entry name" value="YciB"/>
    <property type="match status" value="1"/>
</dbReference>
<dbReference type="InterPro" id="IPR006008">
    <property type="entry name" value="YciB"/>
</dbReference>
<dbReference type="NCBIfam" id="TIGR00997">
    <property type="entry name" value="ispZ"/>
    <property type="match status" value="1"/>
</dbReference>
<dbReference type="NCBIfam" id="NF001323">
    <property type="entry name" value="PRK00259.1-1"/>
    <property type="match status" value="1"/>
</dbReference>
<dbReference type="PANTHER" id="PTHR36917:SF1">
    <property type="entry name" value="INNER MEMBRANE-SPANNING PROTEIN YCIB"/>
    <property type="match status" value="1"/>
</dbReference>
<dbReference type="PANTHER" id="PTHR36917">
    <property type="entry name" value="INTRACELLULAR SEPTATION PROTEIN A-RELATED"/>
    <property type="match status" value="1"/>
</dbReference>
<dbReference type="Pfam" id="PF04279">
    <property type="entry name" value="IspA"/>
    <property type="match status" value="1"/>
</dbReference>
<keyword id="KW-0997">Cell inner membrane</keyword>
<keyword id="KW-1003">Cell membrane</keyword>
<keyword id="KW-0472">Membrane</keyword>
<keyword id="KW-1185">Reference proteome</keyword>
<keyword id="KW-0812">Transmembrane</keyword>
<keyword id="KW-1133">Transmembrane helix</keyword>
<comment type="function">
    <text evidence="1">Plays a role in cell envelope biogenesis, maintenance of cell envelope integrity and membrane homeostasis.</text>
</comment>
<comment type="subcellular location">
    <subcellularLocation>
        <location evidence="1">Cell inner membrane</location>
        <topology evidence="1">Multi-pass membrane protein</topology>
    </subcellularLocation>
</comment>
<comment type="similarity">
    <text evidence="1">Belongs to the YciB family.</text>
</comment>
<reference key="1">
    <citation type="journal article" date="2007" name="Science">
        <title>Legumes symbioses: absence of nod genes in photosynthetic bradyrhizobia.</title>
        <authorList>
            <person name="Giraud E."/>
            <person name="Moulin L."/>
            <person name="Vallenet D."/>
            <person name="Barbe V."/>
            <person name="Cytryn E."/>
            <person name="Avarre J.-C."/>
            <person name="Jaubert M."/>
            <person name="Simon D."/>
            <person name="Cartieaux F."/>
            <person name="Prin Y."/>
            <person name="Bena G."/>
            <person name="Hannibal L."/>
            <person name="Fardoux J."/>
            <person name="Kojadinovic M."/>
            <person name="Vuillet L."/>
            <person name="Lajus A."/>
            <person name="Cruveiller S."/>
            <person name="Rouy Z."/>
            <person name="Mangenot S."/>
            <person name="Segurens B."/>
            <person name="Dossat C."/>
            <person name="Franck W.L."/>
            <person name="Chang W.-S."/>
            <person name="Saunders E."/>
            <person name="Bruce D."/>
            <person name="Richardson P."/>
            <person name="Normand P."/>
            <person name="Dreyfus B."/>
            <person name="Pignol D."/>
            <person name="Stacey G."/>
            <person name="Emerich D."/>
            <person name="Vermeglio A."/>
            <person name="Medigue C."/>
            <person name="Sadowsky M."/>
        </authorList>
    </citation>
    <scope>NUCLEOTIDE SEQUENCE [LARGE SCALE GENOMIC DNA]</scope>
    <source>
        <strain>BTAi1 / ATCC BAA-1182</strain>
    </source>
</reference>
<organism>
    <name type="scientific">Bradyrhizobium sp. (strain BTAi1 / ATCC BAA-1182)</name>
    <dbReference type="NCBI Taxonomy" id="288000"/>
    <lineage>
        <taxon>Bacteria</taxon>
        <taxon>Pseudomonadati</taxon>
        <taxon>Pseudomonadota</taxon>
        <taxon>Alphaproteobacteria</taxon>
        <taxon>Hyphomicrobiales</taxon>
        <taxon>Nitrobacteraceae</taxon>
        <taxon>Bradyrhizobium</taxon>
    </lineage>
</organism>
<accession>A5E919</accession>
<protein>
    <recommendedName>
        <fullName evidence="1">Inner membrane-spanning protein YciB</fullName>
    </recommendedName>
</protein>
<sequence length="200" mass="22036">MDKTQPHPLFKLATELGPLIVFFVVNAKFNLFAATGAFMVAIVAAMIASYVVTKHVPLMAIVTGIVVLVFGTLTLVLHDETFIKLKPTIIYGLFAAVLGGGLLFNRSFIAIMFDQMFNLTPAGWRILTFRWALFFAAMAVLNEIIWRTQSTDFWVGFKAFGVVPLTMIFAIAQMPLIKRYHQDPASLEASDAAEGDVSKG</sequence>
<feature type="chain" id="PRO_1000020984" description="Inner membrane-spanning protein YciB">
    <location>
        <begin position="1"/>
        <end position="200"/>
    </location>
</feature>
<feature type="transmembrane region" description="Helical" evidence="1">
    <location>
        <begin position="7"/>
        <end position="27"/>
    </location>
</feature>
<feature type="transmembrane region" description="Helical" evidence="1">
    <location>
        <begin position="32"/>
        <end position="52"/>
    </location>
</feature>
<feature type="transmembrane region" description="Helical" evidence="1">
    <location>
        <begin position="56"/>
        <end position="76"/>
    </location>
</feature>
<feature type="transmembrane region" description="Helical" evidence="1">
    <location>
        <begin position="93"/>
        <end position="113"/>
    </location>
</feature>
<feature type="transmembrane region" description="Helical" evidence="1">
    <location>
        <begin position="126"/>
        <end position="146"/>
    </location>
</feature>
<feature type="transmembrane region" description="Helical" evidence="1">
    <location>
        <begin position="153"/>
        <end position="173"/>
    </location>
</feature>
<evidence type="ECO:0000255" key="1">
    <source>
        <dbReference type="HAMAP-Rule" id="MF_00189"/>
    </source>
</evidence>
<name>YCIB_BRASB</name>